<organism>
    <name type="scientific">Caenorhabditis elegans</name>
    <dbReference type="NCBI Taxonomy" id="6239"/>
    <lineage>
        <taxon>Eukaryota</taxon>
        <taxon>Metazoa</taxon>
        <taxon>Ecdysozoa</taxon>
        <taxon>Nematoda</taxon>
        <taxon>Chromadorea</taxon>
        <taxon>Rhabditida</taxon>
        <taxon>Rhabditina</taxon>
        <taxon>Rhabditomorpha</taxon>
        <taxon>Rhabditoidea</taxon>
        <taxon>Rhabditidae</taxon>
        <taxon>Peloderinae</taxon>
        <taxon>Caenorhabditis</taxon>
    </lineage>
</organism>
<keyword id="KW-1003">Cell membrane</keyword>
<keyword id="KW-0868">Chloride</keyword>
<keyword id="KW-0869">Chloride channel</keyword>
<keyword id="KW-0407">Ion channel</keyword>
<keyword id="KW-0406">Ion transport</keyword>
<keyword id="KW-0472">Membrane</keyword>
<keyword id="KW-1185">Reference proteome</keyword>
<keyword id="KW-0812">Transmembrane</keyword>
<keyword id="KW-1133">Transmembrane helix</keyword>
<keyword id="KW-0813">Transport</keyword>
<comment type="function">
    <text evidence="1">Forms chloride channels.</text>
</comment>
<comment type="subunit">
    <text evidence="1">Forms oligomers.</text>
</comment>
<comment type="subcellular location">
    <subcellularLocation>
        <location evidence="1">Cell membrane</location>
        <topology evidence="1">Multi-pass membrane protein</topology>
    </subcellularLocation>
</comment>
<comment type="similarity">
    <text evidence="3">Belongs to the anion channel-forming bestrophin (TC 1.A.46) family. Calcium-sensitive chloride channel subfamily.</text>
</comment>
<gene>
    <name type="primary">best-5</name>
    <name type="ORF">C07A9.8</name>
</gene>
<proteinExistence type="inferred from homology"/>
<sequence>MTNNNDPKCVVIEEPDDVPVKPPKIFDFTDWPFEIPDIFKRKELSYNYNYDLATSKSLMIVRMIFKWRGSLWQAVYKELIVWICAYSLVSVIYRFALTRSQKDIFERFGEYCDARMGYLPLNFVLGFFCNIIIRRWLKLYTSLGNIDNIALFVSAYVRGTDDRARQIRRNIIRYCVISQCLVFRDIHVGVRRRFPTLEAVAQAGIMLPHELEKFNSIKSRYQKYWVSFNWALELLNVAKTEKSIDGDNARNAIAQEISKFRSALTTVSMYDWVPIPLMYPQLVNMAVHTYFFLCIFTRQFFISADAHNKTEVDLYIPFMTIIEFIFYMGWLKVAMELLNPFGEDADDFDCNLLIDRNLAIGLTSVDDAYDQLPEVKPDVFTGGSVKPLDSDDTRSLKYHFGSAAQMEEISYLKKEENKMIAAGKKPNKLKLWVKSVRRKRFETSATQPSFPIP</sequence>
<protein>
    <recommendedName>
        <fullName>Bestrophin homolog 5</fullName>
    </recommendedName>
</protein>
<evidence type="ECO:0000250" key="1"/>
<evidence type="ECO:0000255" key="2"/>
<evidence type="ECO:0000305" key="3"/>
<name>BEST5_CAEEL</name>
<feature type="chain" id="PRO_0000143126" description="Bestrophin homolog 5">
    <location>
        <begin position="1"/>
        <end position="453"/>
    </location>
</feature>
<feature type="transmembrane region" description="Helical" evidence="2">
    <location>
        <begin position="78"/>
        <end position="98"/>
    </location>
</feature>
<feature type="transmembrane region" description="Helical" evidence="2">
    <location>
        <begin position="113"/>
        <end position="133"/>
    </location>
</feature>
<feature type="transmembrane region" description="Helical" evidence="2">
    <location>
        <begin position="275"/>
        <end position="295"/>
    </location>
</feature>
<feature type="transmembrane region" description="Helical" evidence="2">
    <location>
        <begin position="314"/>
        <end position="334"/>
    </location>
</feature>
<dbReference type="EMBL" id="Z29094">
    <property type="protein sequence ID" value="CAA82342.2"/>
    <property type="molecule type" value="Genomic_DNA"/>
</dbReference>
<dbReference type="PIR" id="S40708">
    <property type="entry name" value="S40708"/>
</dbReference>
<dbReference type="RefSeq" id="NP_499142.2">
    <property type="nucleotide sequence ID" value="NM_066741.4"/>
</dbReference>
<dbReference type="SMR" id="P34319"/>
<dbReference type="FunCoup" id="P34319">
    <property type="interactions" value="597"/>
</dbReference>
<dbReference type="STRING" id="6239.C07A9.8.1"/>
<dbReference type="PaxDb" id="6239-C07A9.8"/>
<dbReference type="EnsemblMetazoa" id="C07A9.8.1">
    <property type="protein sequence ID" value="C07A9.8.1"/>
    <property type="gene ID" value="WBGene00007404"/>
</dbReference>
<dbReference type="GeneID" id="176367"/>
<dbReference type="KEGG" id="cel:CELE_C07A9.8"/>
<dbReference type="UCSC" id="C07A9.8">
    <property type="organism name" value="c. elegans"/>
</dbReference>
<dbReference type="AGR" id="WB:WBGene00007404"/>
<dbReference type="CTD" id="176367"/>
<dbReference type="WormBase" id="C07A9.8">
    <property type="protein sequence ID" value="CE33596"/>
    <property type="gene ID" value="WBGene00007404"/>
    <property type="gene designation" value="best-5"/>
</dbReference>
<dbReference type="eggNOG" id="KOG3547">
    <property type="taxonomic scope" value="Eukaryota"/>
</dbReference>
<dbReference type="GeneTree" id="ENSGT00970000196383"/>
<dbReference type="HOGENOM" id="CLU_018069_7_1_1"/>
<dbReference type="InParanoid" id="P34319"/>
<dbReference type="OMA" id="GEYCDAR"/>
<dbReference type="OrthoDB" id="201595at2759"/>
<dbReference type="PhylomeDB" id="P34319"/>
<dbReference type="PRO" id="PR:P34319"/>
<dbReference type="Proteomes" id="UP000001940">
    <property type="component" value="Chromosome III"/>
</dbReference>
<dbReference type="Bgee" id="WBGene00007404">
    <property type="expression patterns" value="Expressed in adult organism and 1 other cell type or tissue"/>
</dbReference>
<dbReference type="GO" id="GO:0034707">
    <property type="term" value="C:chloride channel complex"/>
    <property type="evidence" value="ECO:0007669"/>
    <property type="project" value="UniProtKB-KW"/>
</dbReference>
<dbReference type="GO" id="GO:0005886">
    <property type="term" value="C:plasma membrane"/>
    <property type="evidence" value="ECO:0007669"/>
    <property type="project" value="UniProtKB-SubCell"/>
</dbReference>
<dbReference type="GO" id="GO:0005254">
    <property type="term" value="F:chloride channel activity"/>
    <property type="evidence" value="ECO:0000318"/>
    <property type="project" value="GO_Central"/>
</dbReference>
<dbReference type="InterPro" id="IPR000615">
    <property type="entry name" value="Bestrophin"/>
</dbReference>
<dbReference type="InterPro" id="IPR021134">
    <property type="entry name" value="Bestrophin-like"/>
</dbReference>
<dbReference type="PANTHER" id="PTHR10736">
    <property type="entry name" value="BESTROPHIN"/>
    <property type="match status" value="1"/>
</dbReference>
<dbReference type="PANTHER" id="PTHR10736:SF8">
    <property type="entry name" value="BESTROPHIN HOMOLOG 5"/>
    <property type="match status" value="1"/>
</dbReference>
<dbReference type="Pfam" id="PF01062">
    <property type="entry name" value="Bestrophin"/>
    <property type="match status" value="1"/>
</dbReference>
<accession>P34319</accession>
<reference key="1">
    <citation type="journal article" date="1994" name="Nature">
        <title>2.2 Mb of contiguous nucleotide sequence from chromosome III of C. elegans.</title>
        <authorList>
            <person name="Wilson R."/>
            <person name="Ainscough R."/>
            <person name="Anderson K."/>
            <person name="Baynes C."/>
            <person name="Berks M."/>
            <person name="Bonfield J."/>
            <person name="Burton J."/>
            <person name="Connell M."/>
            <person name="Copsey T."/>
            <person name="Cooper J."/>
            <person name="Coulson A."/>
            <person name="Craxton M."/>
            <person name="Dear S."/>
            <person name="Du Z."/>
            <person name="Durbin R."/>
            <person name="Favello A."/>
            <person name="Fraser A."/>
            <person name="Fulton L."/>
            <person name="Gardner A."/>
            <person name="Green P."/>
            <person name="Hawkins T."/>
            <person name="Hillier L."/>
            <person name="Jier M."/>
            <person name="Johnston L."/>
            <person name="Jones M."/>
            <person name="Kershaw J."/>
            <person name="Kirsten J."/>
            <person name="Laisster N."/>
            <person name="Latreille P."/>
            <person name="Lightning J."/>
            <person name="Lloyd C."/>
            <person name="Mortimore B."/>
            <person name="O'Callaghan M."/>
            <person name="Parsons J."/>
            <person name="Percy C."/>
            <person name="Rifken L."/>
            <person name="Roopra A."/>
            <person name="Saunders D."/>
            <person name="Shownkeen R."/>
            <person name="Sims M."/>
            <person name="Smaldon N."/>
            <person name="Smith A."/>
            <person name="Smith M."/>
            <person name="Sonnhammer E."/>
            <person name="Staden R."/>
            <person name="Sulston J."/>
            <person name="Thierry-Mieg J."/>
            <person name="Thomas K."/>
            <person name="Vaudin M."/>
            <person name="Vaughan K."/>
            <person name="Waterston R."/>
            <person name="Watson A."/>
            <person name="Weinstock L."/>
            <person name="Wilkinson-Sproat J."/>
            <person name="Wohldman P."/>
        </authorList>
    </citation>
    <scope>NUCLEOTIDE SEQUENCE [LARGE SCALE GENOMIC DNA]</scope>
    <source>
        <strain>Bristol N2</strain>
    </source>
</reference>
<reference key="2">
    <citation type="journal article" date="1998" name="Science">
        <title>Genome sequence of the nematode C. elegans: a platform for investigating biology.</title>
        <authorList>
            <consortium name="The C. elegans sequencing consortium"/>
        </authorList>
    </citation>
    <scope>NUCLEOTIDE SEQUENCE [LARGE SCALE GENOMIC DNA]</scope>
    <source>
        <strain>Bristol N2</strain>
    </source>
</reference>